<keyword id="KW-0002">3D-structure</keyword>
<keyword id="KW-0238">DNA-binding</keyword>
<keyword id="KW-0614">Plasmid</keyword>
<keyword id="KW-0678">Repressor</keyword>
<keyword id="KW-0804">Transcription</keyword>
<keyword id="KW-0805">Transcription regulation</keyword>
<geneLocation type="plasmid">
    <name>VRSAp</name>
</geneLocation>
<sequence>MNLKDKILGVAKELFIKNGYNATTTGEIVKLSESSKGNLYYHFKTKENLFLEILNIEESKWQEQWKKEQIKCKTNREKFYLYNELSLTTEYYYPLQNAIIEFYTEYYKTNSINEKMNKLENKYIDAYHVIFKEGNLNGEWCINDVNAVSKIAANAVNGIVTFTHEQNINERIKLMNKFSQIFLNGLSK</sequence>
<feature type="chain" id="PRO_0000070608" description="HTH-type transcriptional regulator QacR">
    <location>
        <begin position="1"/>
        <end position="188"/>
    </location>
</feature>
<feature type="domain" description="HTH tetR-type" evidence="2">
    <location>
        <begin position="1"/>
        <end position="61"/>
    </location>
</feature>
<feature type="DNA-binding region" description="H-T-H motif" evidence="2">
    <location>
        <begin position="24"/>
        <end position="43"/>
    </location>
</feature>
<feature type="turn" evidence="7">
    <location>
        <begin position="2"/>
        <end position="4"/>
    </location>
</feature>
<feature type="helix" evidence="3">
    <location>
        <begin position="5"/>
        <end position="18"/>
    </location>
</feature>
<feature type="turn" evidence="3">
    <location>
        <begin position="19"/>
        <end position="22"/>
    </location>
</feature>
<feature type="helix" evidence="3">
    <location>
        <begin position="25"/>
        <end position="31"/>
    </location>
</feature>
<feature type="helix" evidence="3">
    <location>
        <begin position="36"/>
        <end position="42"/>
    </location>
</feature>
<feature type="strand" evidence="5">
    <location>
        <begin position="43"/>
        <end position="45"/>
    </location>
</feature>
<feature type="helix" evidence="3">
    <location>
        <begin position="46"/>
        <end position="68"/>
    </location>
</feature>
<feature type="helix" evidence="3">
    <location>
        <begin position="69"/>
        <end position="71"/>
    </location>
</feature>
<feature type="helix" evidence="3">
    <location>
        <begin position="75"/>
        <end position="88"/>
    </location>
</feature>
<feature type="strand" evidence="3">
    <location>
        <begin position="90"/>
        <end position="92"/>
    </location>
</feature>
<feature type="helix" evidence="3">
    <location>
        <begin position="93"/>
        <end position="95"/>
    </location>
</feature>
<feature type="helix" evidence="3">
    <location>
        <begin position="96"/>
        <end position="103"/>
    </location>
</feature>
<feature type="turn" evidence="4">
    <location>
        <begin position="104"/>
        <end position="107"/>
    </location>
</feature>
<feature type="strand" evidence="6">
    <location>
        <begin position="108"/>
        <end position="111"/>
    </location>
</feature>
<feature type="turn" evidence="6">
    <location>
        <begin position="112"/>
        <end position="114"/>
    </location>
</feature>
<feature type="helix" evidence="3">
    <location>
        <begin position="117"/>
        <end position="136"/>
    </location>
</feature>
<feature type="helix" evidence="3">
    <location>
        <begin position="145"/>
        <end position="162"/>
    </location>
</feature>
<feature type="turn" evidence="3">
    <location>
        <begin position="163"/>
        <end position="165"/>
    </location>
</feature>
<feature type="helix" evidence="3">
    <location>
        <begin position="168"/>
        <end position="184"/>
    </location>
</feature>
<accession>P0A0N3</accession>
<accession>P23217</accession>
<protein>
    <recommendedName>
        <fullName>HTH-type transcriptional regulator QacR</fullName>
    </recommendedName>
</protein>
<comment type="function">
    <text evidence="1">Transcriptional repressor of qacA. Binds to IR1, an unusually long 28 bp operator, which is located downstream from the qacA promoter and overlaps its transcription start site. QacR is induced from its IR1 site by binding to one of many structurally dissimilar cationic lipophilic compounds, which are also substrates of QacA (By similarity).</text>
</comment>
<comment type="subunit">
    <text evidence="1">Homodimer. Binds cooperatively to DNA as a pair of dimers (By similarity).</text>
</comment>
<evidence type="ECO:0000250" key="1"/>
<evidence type="ECO:0000255" key="2">
    <source>
        <dbReference type="PROSITE-ProRule" id="PRU00335"/>
    </source>
</evidence>
<evidence type="ECO:0007829" key="3">
    <source>
        <dbReference type="PDB" id="3BQZ"/>
    </source>
</evidence>
<evidence type="ECO:0007829" key="4">
    <source>
        <dbReference type="PDB" id="3BR0"/>
    </source>
</evidence>
<evidence type="ECO:0007829" key="5">
    <source>
        <dbReference type="PDB" id="3BR3"/>
    </source>
</evidence>
<evidence type="ECO:0007829" key="6">
    <source>
        <dbReference type="PDB" id="3BT9"/>
    </source>
</evidence>
<evidence type="ECO:0007829" key="7">
    <source>
        <dbReference type="PDB" id="3PM1"/>
    </source>
</evidence>
<dbReference type="EMBL" id="AP003367">
    <property type="protein sequence ID" value="BAB47539.1"/>
    <property type="molecule type" value="Genomic_DNA"/>
</dbReference>
<dbReference type="RefSeq" id="WP_001807342.1">
    <property type="nucleotide sequence ID" value="NC_002774.1"/>
</dbReference>
<dbReference type="PDB" id="3BQZ">
    <property type="method" value="X-ray"/>
    <property type="resolution" value="2.17 A"/>
    <property type="chains" value="A/B=1-188"/>
</dbReference>
<dbReference type="PDB" id="3BR0">
    <property type="method" value="X-ray"/>
    <property type="resolution" value="2.42 A"/>
    <property type="chains" value="A/B=1-188"/>
</dbReference>
<dbReference type="PDB" id="3BR1">
    <property type="method" value="X-ray"/>
    <property type="resolution" value="3.31 A"/>
    <property type="chains" value="A/B/D/E=1-188"/>
</dbReference>
<dbReference type="PDB" id="3BR2">
    <property type="method" value="X-ray"/>
    <property type="resolution" value="2.90 A"/>
    <property type="chains" value="A/B/D/E=1-188"/>
</dbReference>
<dbReference type="PDB" id="3BR3">
    <property type="method" value="X-ray"/>
    <property type="resolution" value="2.80 A"/>
    <property type="chains" value="A/B=1-188"/>
</dbReference>
<dbReference type="PDB" id="3BR5">
    <property type="method" value="X-ray"/>
    <property type="resolution" value="2.90 A"/>
    <property type="chains" value="A/B/D/E=1-188"/>
</dbReference>
<dbReference type="PDB" id="3BR6">
    <property type="method" value="X-ray"/>
    <property type="resolution" value="3.20 A"/>
    <property type="chains" value="A/B/D/E=1-188"/>
</dbReference>
<dbReference type="PDB" id="3BT9">
    <property type="method" value="X-ray"/>
    <property type="resolution" value="2.75 A"/>
    <property type="chains" value="A/B/D/E=1-188"/>
</dbReference>
<dbReference type="PDB" id="3BTC">
    <property type="method" value="X-ray"/>
    <property type="resolution" value="2.90 A"/>
    <property type="chains" value="A/B/D/E=1-188"/>
</dbReference>
<dbReference type="PDB" id="3BTI">
    <property type="method" value="X-ray"/>
    <property type="resolution" value="2.85 A"/>
    <property type="chains" value="A/B/D/E=1-188"/>
</dbReference>
<dbReference type="PDB" id="3BTJ">
    <property type="method" value="X-ray"/>
    <property type="resolution" value="2.98 A"/>
    <property type="chains" value="A/B/D/E=1-188"/>
</dbReference>
<dbReference type="PDB" id="3BTL">
    <property type="method" value="X-ray"/>
    <property type="resolution" value="2.90 A"/>
    <property type="chains" value="A/B/D/E=1-188"/>
</dbReference>
<dbReference type="PDB" id="3PM1">
    <property type="method" value="X-ray"/>
    <property type="resolution" value="2.80 A"/>
    <property type="chains" value="A/B=1-188"/>
</dbReference>
<dbReference type="PDBsum" id="3BQZ"/>
<dbReference type="PDBsum" id="3BR0"/>
<dbReference type="PDBsum" id="3BR1"/>
<dbReference type="PDBsum" id="3BR2"/>
<dbReference type="PDBsum" id="3BR3"/>
<dbReference type="PDBsum" id="3BR5"/>
<dbReference type="PDBsum" id="3BR6"/>
<dbReference type="PDBsum" id="3BT9"/>
<dbReference type="PDBsum" id="3BTC"/>
<dbReference type="PDBsum" id="3BTI"/>
<dbReference type="PDBsum" id="3BTJ"/>
<dbReference type="PDBsum" id="3BTL"/>
<dbReference type="PDBsum" id="3PM1"/>
<dbReference type="SMR" id="P0A0N3"/>
<dbReference type="KEGG" id="sav:SAVP031"/>
<dbReference type="HOGENOM" id="CLU_069356_12_2_9"/>
<dbReference type="EvolutionaryTrace" id="P0A0N3"/>
<dbReference type="PRO" id="PR:P0A0N3"/>
<dbReference type="Proteomes" id="UP000002481">
    <property type="component" value="Plasmid VRSAp"/>
</dbReference>
<dbReference type="GO" id="GO:0003677">
    <property type="term" value="F:DNA binding"/>
    <property type="evidence" value="ECO:0007669"/>
    <property type="project" value="UniProtKB-KW"/>
</dbReference>
<dbReference type="GO" id="GO:0003700">
    <property type="term" value="F:DNA-binding transcription factor activity"/>
    <property type="evidence" value="ECO:0007669"/>
    <property type="project" value="InterPro"/>
</dbReference>
<dbReference type="GO" id="GO:0045892">
    <property type="term" value="P:negative regulation of DNA-templated transcription"/>
    <property type="evidence" value="ECO:0007669"/>
    <property type="project" value="InterPro"/>
</dbReference>
<dbReference type="Gene3D" id="1.10.10.60">
    <property type="entry name" value="Homeodomain-like"/>
    <property type="match status" value="1"/>
</dbReference>
<dbReference type="Gene3D" id="1.10.357.10">
    <property type="entry name" value="Tetracycline Repressor, domain 2"/>
    <property type="match status" value="1"/>
</dbReference>
<dbReference type="InterPro" id="IPR023772">
    <property type="entry name" value="DNA-bd_HTH_TetR-type_CS"/>
</dbReference>
<dbReference type="InterPro" id="IPR009057">
    <property type="entry name" value="Homeodomain-like_sf"/>
</dbReference>
<dbReference type="InterPro" id="IPR050624">
    <property type="entry name" value="HTH-type_Tx_Regulator"/>
</dbReference>
<dbReference type="InterPro" id="IPR001647">
    <property type="entry name" value="HTH_TetR"/>
</dbReference>
<dbReference type="InterPro" id="IPR036271">
    <property type="entry name" value="Tet_transcr_reg_TetR-rel_C_sf"/>
</dbReference>
<dbReference type="InterPro" id="IPR013571">
    <property type="entry name" value="Tscrpt_reg_QacR_C"/>
</dbReference>
<dbReference type="PANTHER" id="PTHR43479">
    <property type="entry name" value="ACREF/ENVCD OPERON REPRESSOR-RELATED"/>
    <property type="match status" value="1"/>
</dbReference>
<dbReference type="PANTHER" id="PTHR43479:SF11">
    <property type="entry name" value="ACREF_ENVCD OPERON REPRESSOR-RELATED"/>
    <property type="match status" value="1"/>
</dbReference>
<dbReference type="Pfam" id="PF08360">
    <property type="entry name" value="TetR_C_5"/>
    <property type="match status" value="1"/>
</dbReference>
<dbReference type="Pfam" id="PF00440">
    <property type="entry name" value="TetR_N"/>
    <property type="match status" value="1"/>
</dbReference>
<dbReference type="PRINTS" id="PR00455">
    <property type="entry name" value="HTHTETR"/>
</dbReference>
<dbReference type="SUPFAM" id="SSF46689">
    <property type="entry name" value="Homeodomain-like"/>
    <property type="match status" value="1"/>
</dbReference>
<dbReference type="SUPFAM" id="SSF48498">
    <property type="entry name" value="Tetracyclin repressor-like, C-terminal domain"/>
    <property type="match status" value="1"/>
</dbReference>
<dbReference type="PROSITE" id="PS01081">
    <property type="entry name" value="HTH_TETR_1"/>
    <property type="match status" value="1"/>
</dbReference>
<dbReference type="PROSITE" id="PS50977">
    <property type="entry name" value="HTH_TETR_2"/>
    <property type="match status" value="1"/>
</dbReference>
<gene>
    <name type="primary">qacR</name>
    <name type="ordered locus">SAVP031</name>
</gene>
<reference key="1">
    <citation type="journal article" date="2001" name="Lancet">
        <title>Whole genome sequencing of meticillin-resistant Staphylococcus aureus.</title>
        <authorList>
            <person name="Kuroda M."/>
            <person name="Ohta T."/>
            <person name="Uchiyama I."/>
            <person name="Baba T."/>
            <person name="Yuzawa H."/>
            <person name="Kobayashi I."/>
            <person name="Cui L."/>
            <person name="Oguchi A."/>
            <person name="Aoki K."/>
            <person name="Nagai Y."/>
            <person name="Lian J.-Q."/>
            <person name="Ito T."/>
            <person name="Kanamori M."/>
            <person name="Matsumaru H."/>
            <person name="Maruyama A."/>
            <person name="Murakami H."/>
            <person name="Hosoyama A."/>
            <person name="Mizutani-Ui Y."/>
            <person name="Takahashi N.K."/>
            <person name="Sawano T."/>
            <person name="Inoue R."/>
            <person name="Kaito C."/>
            <person name="Sekimizu K."/>
            <person name="Hirakawa H."/>
            <person name="Kuhara S."/>
            <person name="Goto S."/>
            <person name="Yabuzaki J."/>
            <person name="Kanehisa M."/>
            <person name="Yamashita A."/>
            <person name="Oshima K."/>
            <person name="Furuya K."/>
            <person name="Yoshino C."/>
            <person name="Shiba T."/>
            <person name="Hattori M."/>
            <person name="Ogasawara N."/>
            <person name="Hayashi H."/>
            <person name="Hiramatsu K."/>
        </authorList>
    </citation>
    <scope>NUCLEOTIDE SEQUENCE [LARGE SCALE GENOMIC DNA]</scope>
    <source>
        <strain>Mu50 / ATCC 700699</strain>
        <plasmid>VRSAp</plasmid>
    </source>
</reference>
<proteinExistence type="evidence at protein level"/>
<organism>
    <name type="scientific">Staphylococcus aureus (strain Mu50 / ATCC 700699)</name>
    <dbReference type="NCBI Taxonomy" id="158878"/>
    <lineage>
        <taxon>Bacteria</taxon>
        <taxon>Bacillati</taxon>
        <taxon>Bacillota</taxon>
        <taxon>Bacilli</taxon>
        <taxon>Bacillales</taxon>
        <taxon>Staphylococcaceae</taxon>
        <taxon>Staphylococcus</taxon>
    </lineage>
</organism>
<name>QACR_STAAM</name>